<gene>
    <name evidence="4" type="primary">OMT1B</name>
</gene>
<sequence length="344" mass="37896">MAPKEDSLALAEAWNHGFGFIKTSIVKTAVELGIPDILESRGAPVSIPELAAAVDCSADRLYRVMRFLAYHGIFKRTEPPPESTGGGSVYYAQTLVSRRLTRENLGPFVLLQGTMREPSGCVTAETLRMSKRPGLVDDNDSDRLYEDPVFSMKVFRDAMASHARMTTAAVIENYGEGFLGVGSLVDVGGSYGMALSMLVKAFPWLRGICFDLPEVVARASPLKGVEFVAGSMFESIPKADVVMLMFVLHNWSDEECVEILKRCKDAVPKNKGKVIIIDAVIDEDGNGDEFTGARLGLDVTMMANMFEGRERTYVEWAHIINEAGFRRHVVKNIKTLESVIEAYP</sequence>
<accession>Q6VMW1</accession>
<feature type="chain" id="PRO_0000456911" description="Flavonoid 7-O-methyltransferase 1B">
    <location>
        <begin position="1"/>
        <end position="344"/>
    </location>
</feature>
<feature type="active site" description="Proton acceptor" evidence="2">
    <location>
        <position position="249"/>
    </location>
</feature>
<feature type="binding site" evidence="2">
    <location>
        <position position="211"/>
    </location>
    <ligand>
        <name>S-adenosyl-L-methionine</name>
        <dbReference type="ChEBI" id="CHEBI:59789"/>
    </ligand>
</feature>
<keyword id="KW-0489">Methyltransferase</keyword>
<keyword id="KW-0949">S-adenosyl-L-methionine</keyword>
<keyword id="KW-0808">Transferase</keyword>
<name>OMT1B_MENPI</name>
<organism>
    <name type="scientific">Mentha piperita</name>
    <name type="common">Peppermint</name>
    <name type="synonym">Mentha aquatica x Mentha spicata</name>
    <dbReference type="NCBI Taxonomy" id="34256"/>
    <lineage>
        <taxon>Eukaryota</taxon>
        <taxon>Viridiplantae</taxon>
        <taxon>Streptophyta</taxon>
        <taxon>Embryophyta</taxon>
        <taxon>Tracheophyta</taxon>
        <taxon>Spermatophyta</taxon>
        <taxon>Magnoliopsida</taxon>
        <taxon>eudicotyledons</taxon>
        <taxon>Gunneridae</taxon>
        <taxon>Pentapetalae</taxon>
        <taxon>asterids</taxon>
        <taxon>lamiids</taxon>
        <taxon>Lamiales</taxon>
        <taxon>Lamiaceae</taxon>
        <taxon>Nepetoideae</taxon>
        <taxon>Mentheae</taxon>
        <taxon>Menthinae</taxon>
        <taxon>Mentha</taxon>
    </lineage>
</organism>
<dbReference type="EC" id="2.1.1.-" evidence="2 3"/>
<dbReference type="EC" id="2.1.1.232" evidence="3"/>
<dbReference type="EMBL" id="AY337458">
    <property type="protein sequence ID" value="AAR09599.1"/>
    <property type="molecule type" value="mRNA"/>
</dbReference>
<dbReference type="SMR" id="Q6VMW1"/>
<dbReference type="GO" id="GO:0008171">
    <property type="term" value="F:O-methyltransferase activity"/>
    <property type="evidence" value="ECO:0007669"/>
    <property type="project" value="InterPro"/>
</dbReference>
<dbReference type="GO" id="GO:0046983">
    <property type="term" value="F:protein dimerization activity"/>
    <property type="evidence" value="ECO:0007669"/>
    <property type="project" value="InterPro"/>
</dbReference>
<dbReference type="GO" id="GO:0032259">
    <property type="term" value="P:methylation"/>
    <property type="evidence" value="ECO:0007669"/>
    <property type="project" value="UniProtKB-KW"/>
</dbReference>
<dbReference type="Gene3D" id="3.40.50.150">
    <property type="entry name" value="Vaccinia Virus protein VP39"/>
    <property type="match status" value="1"/>
</dbReference>
<dbReference type="Gene3D" id="1.10.10.10">
    <property type="entry name" value="Winged helix-like DNA-binding domain superfamily/Winged helix DNA-binding domain"/>
    <property type="match status" value="1"/>
</dbReference>
<dbReference type="InterPro" id="IPR016461">
    <property type="entry name" value="COMT-like"/>
</dbReference>
<dbReference type="InterPro" id="IPR001077">
    <property type="entry name" value="O_MeTrfase_dom"/>
</dbReference>
<dbReference type="InterPro" id="IPR012967">
    <property type="entry name" value="Plant_O-MeTrfase_dimerisation"/>
</dbReference>
<dbReference type="InterPro" id="IPR029063">
    <property type="entry name" value="SAM-dependent_MTases_sf"/>
</dbReference>
<dbReference type="InterPro" id="IPR036388">
    <property type="entry name" value="WH-like_DNA-bd_sf"/>
</dbReference>
<dbReference type="InterPro" id="IPR036390">
    <property type="entry name" value="WH_DNA-bd_sf"/>
</dbReference>
<dbReference type="PANTHER" id="PTHR11746">
    <property type="entry name" value="O-METHYLTRANSFERASE"/>
    <property type="match status" value="1"/>
</dbReference>
<dbReference type="Pfam" id="PF08100">
    <property type="entry name" value="Dimerisation"/>
    <property type="match status" value="1"/>
</dbReference>
<dbReference type="Pfam" id="PF00891">
    <property type="entry name" value="Methyltransf_2"/>
    <property type="match status" value="1"/>
</dbReference>
<dbReference type="PIRSF" id="PIRSF005739">
    <property type="entry name" value="O-mtase"/>
    <property type="match status" value="1"/>
</dbReference>
<dbReference type="SUPFAM" id="SSF53335">
    <property type="entry name" value="S-adenosyl-L-methionine-dependent methyltransferases"/>
    <property type="match status" value="1"/>
</dbReference>
<dbReference type="SUPFAM" id="SSF46785">
    <property type="entry name" value="Winged helix' DNA-binding domain"/>
    <property type="match status" value="1"/>
</dbReference>
<dbReference type="PROSITE" id="PS51683">
    <property type="entry name" value="SAM_OMT_II"/>
    <property type="match status" value="1"/>
</dbReference>
<proteinExistence type="evidence at protein level"/>
<protein>
    <recommendedName>
        <fullName evidence="4">Flavonoid 7-O-methyltransferase 1B</fullName>
        <shortName evidence="4">MpOMT1B</shortName>
        <ecNumber evidence="2 3">2.1.1.-</ecNumber>
    </recommendedName>
    <alternativeName>
        <fullName evidence="6">7,8,4'-trihydroxy-flavone 7-O-methyltransferase</fullName>
        <ecNumber evidence="3">2.1.1.-</ecNumber>
    </alternativeName>
    <alternativeName>
        <fullName evidence="6">Apigenin 7-O-methyltransferase</fullName>
        <ecNumber evidence="3">2.1.1.-</ecNumber>
    </alternativeName>
    <alternativeName>
        <fullName evidence="6">Isorhamnetin 7-O-methyltransferase</fullName>
        <ecNumber evidence="3">2.1.1.-</ecNumber>
    </alternativeName>
    <alternativeName>
        <fullName evidence="6">Kaempferol 7-O-methyltransferase</fullName>
        <ecNumber evidence="3">2.1.1.-</ecNumber>
    </alternativeName>
    <alternativeName>
        <fullName evidence="6">Luteolin 7-O-methyltransferase</fullName>
        <ecNumber evidence="3">2.1.1.-</ecNumber>
    </alternativeName>
    <alternativeName>
        <fullName evidence="6">Naringenin 7-O-methyltransferase</fullName>
        <ecNumber evidence="3">2.1.1.232</ecNumber>
    </alternativeName>
    <alternativeName>
        <fullName evidence="6">Quercetin 7-O-methyltransferase</fullName>
        <ecNumber evidence="3">2.1.1.-</ecNumber>
    </alternativeName>
    <alternativeName>
        <fullName evidence="6">Scutellarein 7-O-methyltransferase</fullName>
        <ecNumber evidence="3">2.1.1.-</ecNumber>
    </alternativeName>
</protein>
<evidence type="ECO:0000250" key="1">
    <source>
        <dbReference type="UniProtKB" id="Q7XB10"/>
    </source>
</evidence>
<evidence type="ECO:0000255" key="2">
    <source>
        <dbReference type="PROSITE-ProRule" id="PRU01020"/>
    </source>
</evidence>
<evidence type="ECO:0000269" key="3">
    <source>
    </source>
</evidence>
<evidence type="ECO:0000303" key="4">
    <source>
    </source>
</evidence>
<evidence type="ECO:0000303" key="5">
    <source>
    </source>
</evidence>
<evidence type="ECO:0000305" key="6">
    <source>
    </source>
</evidence>
<comment type="function">
    <text evidence="3">Flavonoid 7-O-methyltransferase involved in the biosynthesis of polymethoxylated flavonoids natural products such as pebrellin, aroma compounds which contribute to the flavor of peppermint, and exhibit pharmacological activities such as anti-allergic, anti-oxidant, antibacterial, anti-proliferative, and anti-inflammatory effects (PubMed:14697269). Catalyzes S-adenosylmethionine-dependent regioselective 7-O-methylation of flavonoids; active on various hydroxylated flavonoid substrates, including luteolin (LUT), quercetin, kaempferol, isorhamnetin, apigenin (API), scutellarein (6-hydroxy-apigenin, 6-OH-API, SCU), 7,8,4'-trihydroxy-flavone and naringenin (NAR), and, with a lower efficiency, 7,8,3',4'-tetrahydroxy-flavone, taxifolin and hesperetin (PubMed:14697269).</text>
</comment>
<comment type="catalytic activity">
    <reaction evidence="3">
        <text>scutellarein + S-adenosyl-L-methionine = scutellarein 7-methyl ether + S-adenosyl-L-homocysteine</text>
        <dbReference type="Rhea" id="RHEA:73079"/>
        <dbReference type="ChEBI" id="CHEBI:57856"/>
        <dbReference type="ChEBI" id="CHEBI:59789"/>
        <dbReference type="ChEBI" id="CHEBI:78328"/>
        <dbReference type="ChEBI" id="CHEBI:192701"/>
    </reaction>
    <physiologicalReaction direction="left-to-right" evidence="6">
        <dbReference type="Rhea" id="RHEA:73080"/>
    </physiologicalReaction>
</comment>
<comment type="catalytic activity">
    <reaction evidence="3">
        <text>4',7,8-trihydroxyflavone + S-adenosyl-L-methionine = 4',8-dihydroxy-7-methoxyflavone + S-adenosyl-L-homocysteine</text>
        <dbReference type="Rhea" id="RHEA:73127"/>
        <dbReference type="ChEBI" id="CHEBI:57856"/>
        <dbReference type="ChEBI" id="CHEBI:59789"/>
        <dbReference type="ChEBI" id="CHEBI:192709"/>
        <dbReference type="ChEBI" id="CHEBI:192764"/>
    </reaction>
    <physiologicalReaction direction="left-to-right" evidence="6">
        <dbReference type="Rhea" id="RHEA:73128"/>
    </physiologicalReaction>
</comment>
<comment type="catalytic activity">
    <reaction evidence="3">
        <text>isorhamnetin + S-adenosyl-L-methionine = rhamnacene + S-adenosyl-L-homocysteine + H(+)</text>
        <dbReference type="Rhea" id="RHEA:73123"/>
        <dbReference type="ChEBI" id="CHEBI:15378"/>
        <dbReference type="ChEBI" id="CHEBI:57856"/>
        <dbReference type="ChEBI" id="CHEBI:59789"/>
        <dbReference type="ChEBI" id="CHEBI:144055"/>
        <dbReference type="ChEBI" id="CHEBI:192768"/>
    </reaction>
    <physiologicalReaction direction="left-to-right" evidence="6">
        <dbReference type="Rhea" id="RHEA:73124"/>
    </physiologicalReaction>
</comment>
<comment type="catalytic activity">
    <reaction evidence="3">
        <text>kaempferol + S-adenosyl-L-methionine = kaempferol 7-methyl ether + S-adenosyl-L-homocysteine + H(+)</text>
        <dbReference type="Rhea" id="RHEA:73119"/>
        <dbReference type="ChEBI" id="CHEBI:15378"/>
        <dbReference type="ChEBI" id="CHEBI:57856"/>
        <dbReference type="ChEBI" id="CHEBI:58573"/>
        <dbReference type="ChEBI" id="CHEBI:59789"/>
        <dbReference type="ChEBI" id="CHEBI:192707"/>
    </reaction>
    <physiologicalReaction direction="left-to-right" evidence="6">
        <dbReference type="Rhea" id="RHEA:73120"/>
    </physiologicalReaction>
</comment>
<comment type="catalytic activity">
    <reaction evidence="3">
        <text>(2S)-naringenin + S-adenosyl-L-methionine = (2S)-sakuranetin + S-adenosyl-L-homocysteine + H(+)</text>
        <dbReference type="Rhea" id="RHEA:31539"/>
        <dbReference type="ChEBI" id="CHEBI:15378"/>
        <dbReference type="ChEBI" id="CHEBI:17846"/>
        <dbReference type="ChEBI" id="CHEBI:28927"/>
        <dbReference type="ChEBI" id="CHEBI:57856"/>
        <dbReference type="ChEBI" id="CHEBI:59789"/>
        <dbReference type="EC" id="2.1.1.232"/>
    </reaction>
    <physiologicalReaction direction="left-to-right" evidence="6">
        <dbReference type="Rhea" id="RHEA:31540"/>
    </physiologicalReaction>
</comment>
<comment type="catalytic activity">
    <reaction evidence="3">
        <text>quercetin + S-adenosyl-L-methionine = rhamnetin + S-adenosyl-L-homocysteine + H(+)</text>
        <dbReference type="Rhea" id="RHEA:73115"/>
        <dbReference type="ChEBI" id="CHEBI:15378"/>
        <dbReference type="ChEBI" id="CHEBI:57694"/>
        <dbReference type="ChEBI" id="CHEBI:57856"/>
        <dbReference type="ChEBI" id="CHEBI:59789"/>
        <dbReference type="ChEBI" id="CHEBI:192706"/>
    </reaction>
    <physiologicalReaction direction="left-to-right" evidence="6">
        <dbReference type="Rhea" id="RHEA:73116"/>
    </physiologicalReaction>
</comment>
<comment type="catalytic activity">
    <reaction evidence="3">
        <text>apigenin + S-adenosyl-L-methionine = genkwanin + S-adenosyl-L-homocysteine + H(+)</text>
        <dbReference type="Rhea" id="RHEA:73071"/>
        <dbReference type="ChEBI" id="CHEBI:15378"/>
        <dbReference type="ChEBI" id="CHEBI:57856"/>
        <dbReference type="ChEBI" id="CHEBI:58470"/>
        <dbReference type="ChEBI" id="CHEBI:59789"/>
        <dbReference type="ChEBI" id="CHEBI:192700"/>
    </reaction>
    <physiologicalReaction direction="left-to-right" evidence="6">
        <dbReference type="Rhea" id="RHEA:73072"/>
    </physiologicalReaction>
</comment>
<comment type="catalytic activity">
    <reaction evidence="3">
        <text>luteolin + S-adenosyl-L-methionine = luteolin 7-methyl ether + S-adenosyl-L-homocysteine + H(+)</text>
        <dbReference type="Rhea" id="RHEA:73075"/>
        <dbReference type="ChEBI" id="CHEBI:15378"/>
        <dbReference type="ChEBI" id="CHEBI:57545"/>
        <dbReference type="ChEBI" id="CHEBI:57856"/>
        <dbReference type="ChEBI" id="CHEBI:59789"/>
        <dbReference type="ChEBI" id="CHEBI:192705"/>
    </reaction>
    <physiologicalReaction direction="left-to-right" evidence="6">
        <dbReference type="Rhea" id="RHEA:73076"/>
    </physiologicalReaction>
</comment>
<comment type="pathway">
    <text evidence="5">Flavonoid metabolism.</text>
</comment>
<comment type="subunit">
    <text evidence="1">Homodimer.</text>
</comment>
<comment type="similarity">
    <text evidence="2">Belongs to the class I-like SAM-binding methyltransferase superfamily. Cation-independent O-methyltransferase family.</text>
</comment>
<reference key="1">
    <citation type="journal article" date="2004" name="Phytochemistry">
        <title>Bio-fermentation of modified flavonoids: an example of in vivo diversification of secondary metabolites.</title>
        <authorList>
            <person name="Willits M.G."/>
            <person name="Giovanni M."/>
            <person name="Prata R.T.N."/>
            <person name="Kramer C.M."/>
            <person name="De Luca V."/>
            <person name="Steffens J.C."/>
            <person name="Graser G."/>
        </authorList>
    </citation>
    <scope>NUCLEOTIDE SEQUENCE [MRNA]</scope>
    <scope>FUNCTION</scope>
    <scope>CATALYTIC ACTIVITY</scope>
    <source>
        <tissue>Leaf</tissue>
    </source>
</reference>
<reference key="2">
    <citation type="journal article" date="2019" name="Nat. Prod. Rep.">
        <title>Non-volatile natural products in plant glandular trichomes: chemistry, biological activities and biosynthesis.</title>
        <authorList>
            <person name="Liu Y."/>
            <person name="Jing S.-X."/>
            <person name="Luo S.-H."/>
            <person name="Li S.-H."/>
        </authorList>
    </citation>
    <scope>PATHWAY</scope>
    <scope>REVIEW</scope>
</reference>